<gene>
    <name evidence="1" type="primary">rlmN</name>
    <name type="ordered locus">SP_0768</name>
</gene>
<sequence>MKPSIHSLVHQTMQEWVLEQGEKKFRADQIWEWLYRKRVQSFEEMTNLSKDLIAKLNDQFVVNPLKQRIVQESADGTVKYLFELPDGMLIETVLMRQHYGLSVCVTTQVGCNIGCTFCASGLIKKQRDLNNGEIVAQIMLVQKYFDERGQDERISHIVVMGIGEPFDNYNNVLNFFRTINDDKGMAIGARHITVSTSGLAHKIRDFADEGVQVNLAVSLHAPNNELRSSIMKINRAFPIEKLFAAIEYYIETTNRRVTFEYIMLNEVNDGVEQALELTELLKNIKKLSYVNLIPYNPVSEHDQYSRSPKECVLAFYDTLKKKGVNCVVRQEHGTDIDAACGQLRSNTMKRDRQKAVAAVNP</sequence>
<reference key="1">
    <citation type="journal article" date="2001" name="Science">
        <title>Complete genome sequence of a virulent isolate of Streptococcus pneumoniae.</title>
        <authorList>
            <person name="Tettelin H."/>
            <person name="Nelson K.E."/>
            <person name="Paulsen I.T."/>
            <person name="Eisen J.A."/>
            <person name="Read T.D."/>
            <person name="Peterson S.N."/>
            <person name="Heidelberg J.F."/>
            <person name="DeBoy R.T."/>
            <person name="Haft D.H."/>
            <person name="Dodson R.J."/>
            <person name="Durkin A.S."/>
            <person name="Gwinn M.L."/>
            <person name="Kolonay J.F."/>
            <person name="Nelson W.C."/>
            <person name="Peterson J.D."/>
            <person name="Umayam L.A."/>
            <person name="White O."/>
            <person name="Salzberg S.L."/>
            <person name="Lewis M.R."/>
            <person name="Radune D."/>
            <person name="Holtzapple E.K."/>
            <person name="Khouri H.M."/>
            <person name="Wolf A.M."/>
            <person name="Utterback T.R."/>
            <person name="Hansen C.L."/>
            <person name="McDonald L.A."/>
            <person name="Feldblyum T.V."/>
            <person name="Angiuoli S.V."/>
            <person name="Dickinson T."/>
            <person name="Hickey E.K."/>
            <person name="Holt I.E."/>
            <person name="Loftus B.J."/>
            <person name="Yang F."/>
            <person name="Smith H.O."/>
            <person name="Venter J.C."/>
            <person name="Dougherty B.A."/>
            <person name="Morrison D.A."/>
            <person name="Hollingshead S.K."/>
            <person name="Fraser C.M."/>
        </authorList>
    </citation>
    <scope>NUCLEOTIDE SEQUENCE [LARGE SCALE GENOMIC DNA]</scope>
    <source>
        <strain>ATCC BAA-334 / TIGR4</strain>
    </source>
</reference>
<accession>Q97RN5</accession>
<evidence type="ECO:0000255" key="1">
    <source>
        <dbReference type="HAMAP-Rule" id="MF_01849"/>
    </source>
</evidence>
<evidence type="ECO:0000255" key="2">
    <source>
        <dbReference type="PROSITE-ProRule" id="PRU01266"/>
    </source>
</evidence>
<comment type="function">
    <text evidence="1">Specifically methylates position 2 of adenine 2503 in 23S rRNA and position 2 of adenine 37 in tRNAs.</text>
</comment>
<comment type="catalytic activity">
    <reaction evidence="1">
        <text>adenosine(2503) in 23S rRNA + 2 reduced [2Fe-2S]-[ferredoxin] + 2 S-adenosyl-L-methionine = 2-methyladenosine(2503) in 23S rRNA + 5'-deoxyadenosine + L-methionine + 2 oxidized [2Fe-2S]-[ferredoxin] + S-adenosyl-L-homocysteine</text>
        <dbReference type="Rhea" id="RHEA:42916"/>
        <dbReference type="Rhea" id="RHEA-COMP:10000"/>
        <dbReference type="Rhea" id="RHEA-COMP:10001"/>
        <dbReference type="Rhea" id="RHEA-COMP:10152"/>
        <dbReference type="Rhea" id="RHEA-COMP:10282"/>
        <dbReference type="ChEBI" id="CHEBI:17319"/>
        <dbReference type="ChEBI" id="CHEBI:33737"/>
        <dbReference type="ChEBI" id="CHEBI:33738"/>
        <dbReference type="ChEBI" id="CHEBI:57844"/>
        <dbReference type="ChEBI" id="CHEBI:57856"/>
        <dbReference type="ChEBI" id="CHEBI:59789"/>
        <dbReference type="ChEBI" id="CHEBI:74411"/>
        <dbReference type="ChEBI" id="CHEBI:74497"/>
        <dbReference type="EC" id="2.1.1.192"/>
    </reaction>
</comment>
<comment type="catalytic activity">
    <reaction evidence="1">
        <text>adenosine(37) in tRNA + 2 reduced [2Fe-2S]-[ferredoxin] + 2 S-adenosyl-L-methionine = 2-methyladenosine(37) in tRNA + 5'-deoxyadenosine + L-methionine + 2 oxidized [2Fe-2S]-[ferredoxin] + S-adenosyl-L-homocysteine</text>
        <dbReference type="Rhea" id="RHEA:43332"/>
        <dbReference type="Rhea" id="RHEA-COMP:10000"/>
        <dbReference type="Rhea" id="RHEA-COMP:10001"/>
        <dbReference type="Rhea" id="RHEA-COMP:10162"/>
        <dbReference type="Rhea" id="RHEA-COMP:10485"/>
        <dbReference type="ChEBI" id="CHEBI:17319"/>
        <dbReference type="ChEBI" id="CHEBI:33737"/>
        <dbReference type="ChEBI" id="CHEBI:33738"/>
        <dbReference type="ChEBI" id="CHEBI:57844"/>
        <dbReference type="ChEBI" id="CHEBI:57856"/>
        <dbReference type="ChEBI" id="CHEBI:59789"/>
        <dbReference type="ChEBI" id="CHEBI:74411"/>
        <dbReference type="ChEBI" id="CHEBI:74497"/>
        <dbReference type="EC" id="2.1.1.192"/>
    </reaction>
</comment>
<comment type="cofactor">
    <cofactor evidence="1">
        <name>[4Fe-4S] cluster</name>
        <dbReference type="ChEBI" id="CHEBI:49883"/>
    </cofactor>
    <text evidence="1">Binds 1 [4Fe-4S] cluster. The cluster is coordinated with 3 cysteines and an exchangeable S-adenosyl-L-methionine.</text>
</comment>
<comment type="subcellular location">
    <subcellularLocation>
        <location evidence="1">Cytoplasm</location>
    </subcellularLocation>
</comment>
<comment type="miscellaneous">
    <text evidence="1">Reaction proceeds by a ping-pong mechanism involving intermediate methylation of a conserved cysteine residue.</text>
</comment>
<comment type="similarity">
    <text evidence="1">Belongs to the radical SAM superfamily. RlmN family.</text>
</comment>
<dbReference type="EC" id="2.1.1.192" evidence="1"/>
<dbReference type="EMBL" id="AE005672">
    <property type="protein sequence ID" value="AAK74906.1"/>
    <property type="molecule type" value="Genomic_DNA"/>
</dbReference>
<dbReference type="PIR" id="A95089">
    <property type="entry name" value="A95089"/>
</dbReference>
<dbReference type="RefSeq" id="WP_000804659.1">
    <property type="nucleotide sequence ID" value="NZ_CP155539.1"/>
</dbReference>
<dbReference type="SMR" id="Q97RN5"/>
<dbReference type="IntAct" id="Q97RN5">
    <property type="interactions" value="1"/>
</dbReference>
<dbReference type="PaxDb" id="170187-SP_0768"/>
<dbReference type="EnsemblBacteria" id="AAK74906">
    <property type="protein sequence ID" value="AAK74906"/>
    <property type="gene ID" value="SP_0768"/>
</dbReference>
<dbReference type="KEGG" id="spn:SP_0768"/>
<dbReference type="eggNOG" id="COG0820">
    <property type="taxonomic scope" value="Bacteria"/>
</dbReference>
<dbReference type="PhylomeDB" id="Q97RN5"/>
<dbReference type="BioCyc" id="SPNE170187:G1FZB-784-MONOMER"/>
<dbReference type="Proteomes" id="UP000000585">
    <property type="component" value="Chromosome"/>
</dbReference>
<dbReference type="GO" id="GO:0005737">
    <property type="term" value="C:cytoplasm"/>
    <property type="evidence" value="ECO:0007669"/>
    <property type="project" value="UniProtKB-SubCell"/>
</dbReference>
<dbReference type="GO" id="GO:0051539">
    <property type="term" value="F:4 iron, 4 sulfur cluster binding"/>
    <property type="evidence" value="ECO:0007669"/>
    <property type="project" value="UniProtKB-UniRule"/>
</dbReference>
<dbReference type="GO" id="GO:0046872">
    <property type="term" value="F:metal ion binding"/>
    <property type="evidence" value="ECO:0007669"/>
    <property type="project" value="UniProtKB-KW"/>
</dbReference>
<dbReference type="GO" id="GO:0070040">
    <property type="term" value="F:rRNA (adenine(2503)-C2-)-methyltransferase activity"/>
    <property type="evidence" value="ECO:0007669"/>
    <property type="project" value="UniProtKB-UniRule"/>
</dbReference>
<dbReference type="GO" id="GO:0019843">
    <property type="term" value="F:rRNA binding"/>
    <property type="evidence" value="ECO:0007669"/>
    <property type="project" value="UniProtKB-UniRule"/>
</dbReference>
<dbReference type="GO" id="GO:0002935">
    <property type="term" value="F:tRNA (adenine(37)-C2)-methyltransferase activity"/>
    <property type="evidence" value="ECO:0007669"/>
    <property type="project" value="UniProtKB-UniRule"/>
</dbReference>
<dbReference type="GO" id="GO:0000049">
    <property type="term" value="F:tRNA binding"/>
    <property type="evidence" value="ECO:0007669"/>
    <property type="project" value="UniProtKB-UniRule"/>
</dbReference>
<dbReference type="GO" id="GO:0070475">
    <property type="term" value="P:rRNA base methylation"/>
    <property type="evidence" value="ECO:0007669"/>
    <property type="project" value="UniProtKB-UniRule"/>
</dbReference>
<dbReference type="GO" id="GO:0030488">
    <property type="term" value="P:tRNA methylation"/>
    <property type="evidence" value="ECO:0007669"/>
    <property type="project" value="UniProtKB-UniRule"/>
</dbReference>
<dbReference type="CDD" id="cd01335">
    <property type="entry name" value="Radical_SAM"/>
    <property type="match status" value="1"/>
</dbReference>
<dbReference type="FunFam" id="1.10.150.530:FF:000002">
    <property type="entry name" value="Probable dual-specificity RNA methyltransferase RlmN"/>
    <property type="match status" value="1"/>
</dbReference>
<dbReference type="FunFam" id="3.20.20.70:FF:000014">
    <property type="entry name" value="Probable dual-specificity RNA methyltransferase RlmN"/>
    <property type="match status" value="1"/>
</dbReference>
<dbReference type="Gene3D" id="1.10.150.530">
    <property type="match status" value="1"/>
</dbReference>
<dbReference type="Gene3D" id="3.20.20.70">
    <property type="entry name" value="Aldolase class I"/>
    <property type="match status" value="1"/>
</dbReference>
<dbReference type="HAMAP" id="MF_01849">
    <property type="entry name" value="RNA_methyltr_RlmN"/>
    <property type="match status" value="1"/>
</dbReference>
<dbReference type="InterPro" id="IPR013785">
    <property type="entry name" value="Aldolase_TIM"/>
</dbReference>
<dbReference type="InterPro" id="IPR040072">
    <property type="entry name" value="Methyltransferase_A"/>
</dbReference>
<dbReference type="InterPro" id="IPR048641">
    <property type="entry name" value="RlmN_N"/>
</dbReference>
<dbReference type="InterPro" id="IPR027492">
    <property type="entry name" value="RNA_MTrfase_RlmN"/>
</dbReference>
<dbReference type="InterPro" id="IPR004383">
    <property type="entry name" value="rRNA_lsu_MTrfase_RlmN/Cfr"/>
</dbReference>
<dbReference type="InterPro" id="IPR007197">
    <property type="entry name" value="rSAM"/>
</dbReference>
<dbReference type="NCBIfam" id="TIGR00048">
    <property type="entry name" value="rRNA_mod_RlmN"/>
    <property type="match status" value="1"/>
</dbReference>
<dbReference type="PANTHER" id="PTHR30544">
    <property type="entry name" value="23S RRNA METHYLTRANSFERASE"/>
    <property type="match status" value="1"/>
</dbReference>
<dbReference type="PANTHER" id="PTHR30544:SF5">
    <property type="entry name" value="RADICAL SAM CORE DOMAIN-CONTAINING PROTEIN"/>
    <property type="match status" value="1"/>
</dbReference>
<dbReference type="Pfam" id="PF04055">
    <property type="entry name" value="Radical_SAM"/>
    <property type="match status" value="1"/>
</dbReference>
<dbReference type="Pfam" id="PF21016">
    <property type="entry name" value="RlmN_N"/>
    <property type="match status" value="1"/>
</dbReference>
<dbReference type="PIRSF" id="PIRSF006004">
    <property type="entry name" value="CHP00048"/>
    <property type="match status" value="1"/>
</dbReference>
<dbReference type="SFLD" id="SFLDF00275">
    <property type="entry name" value="adenosine_C2_methyltransferase"/>
    <property type="match status" value="1"/>
</dbReference>
<dbReference type="SFLD" id="SFLDG01062">
    <property type="entry name" value="methyltransferase_(Class_A)"/>
    <property type="match status" value="1"/>
</dbReference>
<dbReference type="SUPFAM" id="SSF102114">
    <property type="entry name" value="Radical SAM enzymes"/>
    <property type="match status" value="1"/>
</dbReference>
<dbReference type="PROSITE" id="PS51918">
    <property type="entry name" value="RADICAL_SAM"/>
    <property type="match status" value="1"/>
</dbReference>
<proteinExistence type="inferred from homology"/>
<keyword id="KW-0004">4Fe-4S</keyword>
<keyword id="KW-0963">Cytoplasm</keyword>
<keyword id="KW-1015">Disulfide bond</keyword>
<keyword id="KW-0408">Iron</keyword>
<keyword id="KW-0411">Iron-sulfur</keyword>
<keyword id="KW-0479">Metal-binding</keyword>
<keyword id="KW-0489">Methyltransferase</keyword>
<keyword id="KW-1185">Reference proteome</keyword>
<keyword id="KW-0698">rRNA processing</keyword>
<keyword id="KW-0949">S-adenosyl-L-methionine</keyword>
<keyword id="KW-0808">Transferase</keyword>
<keyword id="KW-0819">tRNA processing</keyword>
<name>RLMN_STRPN</name>
<protein>
    <recommendedName>
        <fullName evidence="1">Probable dual-specificity RNA methyltransferase RlmN</fullName>
        <ecNumber evidence="1">2.1.1.192</ecNumber>
    </recommendedName>
    <alternativeName>
        <fullName evidence="1">23S rRNA (adenine(2503)-C(2))-methyltransferase</fullName>
    </alternativeName>
    <alternativeName>
        <fullName evidence="1">23S rRNA m2A2503 methyltransferase</fullName>
    </alternativeName>
    <alternativeName>
        <fullName evidence="1">Ribosomal RNA large subunit methyltransferase N</fullName>
    </alternativeName>
    <alternativeName>
        <fullName evidence="1">tRNA (adenine(37)-C(2))-methyltransferase</fullName>
    </alternativeName>
    <alternativeName>
        <fullName evidence="1">tRNA m2A37 methyltransferase</fullName>
    </alternativeName>
</protein>
<feature type="chain" id="PRO_0000350453" description="Probable dual-specificity RNA methyltransferase RlmN">
    <location>
        <begin position="1"/>
        <end position="361"/>
    </location>
</feature>
<feature type="domain" description="Radical SAM core" evidence="2">
    <location>
        <begin position="97"/>
        <end position="329"/>
    </location>
</feature>
<feature type="active site" description="Proton acceptor" evidence="1">
    <location>
        <position position="91"/>
    </location>
</feature>
<feature type="active site" description="S-methylcysteine intermediate" evidence="1">
    <location>
        <position position="340"/>
    </location>
</feature>
<feature type="binding site" evidence="1">
    <location>
        <position position="111"/>
    </location>
    <ligand>
        <name>[4Fe-4S] cluster</name>
        <dbReference type="ChEBI" id="CHEBI:49883"/>
        <note>4Fe-4S-S-AdoMet</note>
    </ligand>
</feature>
<feature type="binding site" evidence="1">
    <location>
        <position position="115"/>
    </location>
    <ligand>
        <name>[4Fe-4S] cluster</name>
        <dbReference type="ChEBI" id="CHEBI:49883"/>
        <note>4Fe-4S-S-AdoMet</note>
    </ligand>
</feature>
<feature type="binding site" evidence="1">
    <location>
        <position position="118"/>
    </location>
    <ligand>
        <name>[4Fe-4S] cluster</name>
        <dbReference type="ChEBI" id="CHEBI:49883"/>
        <note>4Fe-4S-S-AdoMet</note>
    </ligand>
</feature>
<feature type="binding site" evidence="1">
    <location>
        <begin position="163"/>
        <end position="164"/>
    </location>
    <ligand>
        <name>S-adenosyl-L-methionine</name>
        <dbReference type="ChEBI" id="CHEBI:59789"/>
    </ligand>
</feature>
<feature type="binding site" evidence="1">
    <location>
        <position position="195"/>
    </location>
    <ligand>
        <name>S-adenosyl-L-methionine</name>
        <dbReference type="ChEBI" id="CHEBI:59789"/>
    </ligand>
</feature>
<feature type="binding site" evidence="1">
    <location>
        <begin position="218"/>
        <end position="220"/>
    </location>
    <ligand>
        <name>S-adenosyl-L-methionine</name>
        <dbReference type="ChEBI" id="CHEBI:59789"/>
    </ligand>
</feature>
<feature type="binding site" evidence="1">
    <location>
        <position position="296"/>
    </location>
    <ligand>
        <name>S-adenosyl-L-methionine</name>
        <dbReference type="ChEBI" id="CHEBI:59789"/>
    </ligand>
</feature>
<feature type="disulfide bond" description="(transient)" evidence="1">
    <location>
        <begin position="104"/>
        <end position="340"/>
    </location>
</feature>
<organism>
    <name type="scientific">Streptococcus pneumoniae serotype 4 (strain ATCC BAA-334 / TIGR4)</name>
    <dbReference type="NCBI Taxonomy" id="170187"/>
    <lineage>
        <taxon>Bacteria</taxon>
        <taxon>Bacillati</taxon>
        <taxon>Bacillota</taxon>
        <taxon>Bacilli</taxon>
        <taxon>Lactobacillales</taxon>
        <taxon>Streptococcaceae</taxon>
        <taxon>Streptococcus</taxon>
    </lineage>
</organism>